<gene>
    <name evidence="5" type="primary">VIT1</name>
    <name evidence="8" type="ordered locus">Os04g0463400</name>
    <name evidence="6" type="ordered locus">LOC_Os04g38940</name>
    <name evidence="9" type="ORF">B1358B12.19</name>
    <name evidence="10" type="ORF">OsJ_15080</name>
</gene>
<dbReference type="EMBL" id="BX842605">
    <property type="protein sequence ID" value="CAE76010.1"/>
    <property type="molecule type" value="Genomic_DNA"/>
</dbReference>
<dbReference type="EMBL" id="AP008210">
    <property type="protein sequence ID" value="BAF14924.1"/>
    <property type="molecule type" value="Genomic_DNA"/>
</dbReference>
<dbReference type="EMBL" id="AP014960">
    <property type="protein sequence ID" value="BAS89575.1"/>
    <property type="molecule type" value="Genomic_DNA"/>
</dbReference>
<dbReference type="EMBL" id="CM000141">
    <property type="protein sequence ID" value="EAZ30998.1"/>
    <property type="molecule type" value="Genomic_DNA"/>
</dbReference>
<dbReference type="EMBL" id="AK059730">
    <property type="protein sequence ID" value="BAG87087.1"/>
    <property type="molecule type" value="mRNA"/>
</dbReference>
<dbReference type="RefSeq" id="XP_015636127.1">
    <property type="nucleotide sequence ID" value="XM_015780641.1"/>
</dbReference>
<dbReference type="SMR" id="Q6MWE5"/>
<dbReference type="FunCoup" id="Q6MWE5">
    <property type="interactions" value="8"/>
</dbReference>
<dbReference type="STRING" id="39947.Q6MWE5"/>
<dbReference type="PaxDb" id="39947-Q6MWE5"/>
<dbReference type="EnsemblPlants" id="Os04t0463400-01">
    <property type="protein sequence ID" value="Os04t0463400-01"/>
    <property type="gene ID" value="Os04g0463400"/>
</dbReference>
<dbReference type="Gramene" id="Os04t0463400-01">
    <property type="protein sequence ID" value="Os04t0463400-01"/>
    <property type="gene ID" value="Os04g0463400"/>
</dbReference>
<dbReference type="KEGG" id="dosa:Os04g0463400"/>
<dbReference type="eggNOG" id="KOG4473">
    <property type="taxonomic scope" value="Eukaryota"/>
</dbReference>
<dbReference type="HOGENOM" id="CLU_038957_0_2_1"/>
<dbReference type="InParanoid" id="Q6MWE5"/>
<dbReference type="OMA" id="RMHDCEF"/>
<dbReference type="OrthoDB" id="73465at2759"/>
<dbReference type="Proteomes" id="UP000000763">
    <property type="component" value="Chromosome 4"/>
</dbReference>
<dbReference type="Proteomes" id="UP000007752">
    <property type="component" value="Chromosome 4"/>
</dbReference>
<dbReference type="Proteomes" id="UP000059680">
    <property type="component" value="Chromosome 4"/>
</dbReference>
<dbReference type="GO" id="GO:0005774">
    <property type="term" value="C:vacuolar membrane"/>
    <property type="evidence" value="ECO:0000314"/>
    <property type="project" value="UniProtKB"/>
</dbReference>
<dbReference type="GO" id="GO:0005381">
    <property type="term" value="F:iron ion transmembrane transporter activity"/>
    <property type="evidence" value="ECO:0000315"/>
    <property type="project" value="CACAO"/>
</dbReference>
<dbReference type="GO" id="GO:0005384">
    <property type="term" value="F:manganese ion transmembrane transporter activity"/>
    <property type="evidence" value="ECO:0000318"/>
    <property type="project" value="GO_Central"/>
</dbReference>
<dbReference type="GO" id="GO:0046872">
    <property type="term" value="F:metal ion binding"/>
    <property type="evidence" value="ECO:0007669"/>
    <property type="project" value="UniProtKB-KW"/>
</dbReference>
<dbReference type="GO" id="GO:0006879">
    <property type="term" value="P:intracellular iron ion homeostasis"/>
    <property type="evidence" value="ECO:0000314"/>
    <property type="project" value="UniProtKB"/>
</dbReference>
<dbReference type="GO" id="GO:0030026">
    <property type="term" value="P:intracellular manganese ion homeostasis"/>
    <property type="evidence" value="ECO:0000318"/>
    <property type="project" value="GO_Central"/>
</dbReference>
<dbReference type="CDD" id="cd02435">
    <property type="entry name" value="CCC1"/>
    <property type="match status" value="1"/>
</dbReference>
<dbReference type="InterPro" id="IPR008217">
    <property type="entry name" value="Ccc1_fam"/>
</dbReference>
<dbReference type="PANTHER" id="PTHR31851">
    <property type="entry name" value="FE(2+)/MN(2+) TRANSPORTER PCL1"/>
    <property type="match status" value="1"/>
</dbReference>
<dbReference type="Pfam" id="PF01988">
    <property type="entry name" value="VIT1"/>
    <property type="match status" value="1"/>
</dbReference>
<keyword id="KW-0406">Ion transport</keyword>
<keyword id="KW-0408">Iron</keyword>
<keyword id="KW-0410">Iron transport</keyword>
<keyword id="KW-0472">Membrane</keyword>
<keyword id="KW-0479">Metal-binding</keyword>
<keyword id="KW-1185">Reference proteome</keyword>
<keyword id="KW-0812">Transmembrane</keyword>
<keyword id="KW-1133">Transmembrane helix</keyword>
<keyword id="KW-0813">Transport</keyword>
<keyword id="KW-0926">Vacuole</keyword>
<sequence length="252" mass="26551">MAAATDGGGLPLLADKAASHSHHHHPERHFTSGEVVRDVIMGVSDGLTVPFALAAGLSGASAPSSLVLTAGLAEVAAGAISMGLGGYLAAKSEADHYQREMKREQEEIIAVPDTEAAEIGEIMSQYGLEPHEYGPVVDGLRRNPQAWLDFMMRFELGLEKPDPKRAIQSALTIALSYVIGGLVPLLPYMFISTAQNAMLTSVGVTLVALLFFGYIKGRFTGNRPFLSAVQTAIIGALASAAAYGMAKAVQTR</sequence>
<name>VIT1_ORYSJ</name>
<protein>
    <recommendedName>
        <fullName evidence="6">Vacuolar iron transporter 1</fullName>
        <shortName evidence="5">OsVIT1</shortName>
    </recommendedName>
</protein>
<feature type="chain" id="PRO_0000411005" description="Vacuolar iron transporter 1">
    <location>
        <begin position="1"/>
        <end position="252"/>
    </location>
</feature>
<feature type="topological domain" description="Cytoplasmic" evidence="2">
    <location>
        <begin position="1"/>
        <end position="38"/>
    </location>
</feature>
<feature type="transmembrane region" description="Helical" evidence="2">
    <location>
        <begin position="39"/>
        <end position="59"/>
    </location>
</feature>
<feature type="topological domain" description="Vacuolar" evidence="2">
    <location>
        <begin position="60"/>
        <end position="65"/>
    </location>
</feature>
<feature type="transmembrane region" description="Helical" evidence="2">
    <location>
        <begin position="66"/>
        <end position="86"/>
    </location>
</feature>
<feature type="topological domain" description="Cytoplasmic" evidence="2">
    <location>
        <begin position="87"/>
        <end position="170"/>
    </location>
</feature>
<feature type="transmembrane region" description="Helical" evidence="2">
    <location>
        <begin position="171"/>
        <end position="191"/>
    </location>
</feature>
<feature type="topological domain" description="Vacuolar" evidence="2">
    <location>
        <begin position="192"/>
        <end position="196"/>
    </location>
</feature>
<feature type="transmembrane region" description="Helical" evidence="2">
    <location>
        <begin position="197"/>
        <end position="217"/>
    </location>
</feature>
<feature type="topological domain" description="Cytoplasmic" evidence="2">
    <location>
        <begin position="218"/>
        <end position="224"/>
    </location>
</feature>
<feature type="transmembrane region" description="Helical" evidence="2">
    <location>
        <begin position="225"/>
        <end position="245"/>
    </location>
</feature>
<feature type="topological domain" description="Vacuolar" evidence="2">
    <location>
        <begin position="246"/>
        <end position="252"/>
    </location>
</feature>
<feature type="region of interest" description="Cytoplasmic metal binding domain (MBD)" evidence="1">
    <location>
        <begin position="92"/>
        <end position="167"/>
    </location>
</feature>
<feature type="binding site" evidence="1">
    <location>
        <position position="104"/>
    </location>
    <ligand>
        <name>Fe cation</name>
        <dbReference type="ChEBI" id="CHEBI:24875"/>
        <label>1</label>
    </ligand>
</feature>
<feature type="binding site" evidence="1">
    <location>
        <position position="104"/>
    </location>
    <ligand>
        <name>Fe cation</name>
        <dbReference type="ChEBI" id="CHEBI:24875"/>
        <label>2</label>
    </ligand>
</feature>
<feature type="binding site" evidence="1">
    <location>
        <position position="107"/>
    </location>
    <ligand>
        <name>Fe cation</name>
        <dbReference type="ChEBI" id="CHEBI:24875"/>
        <label>1</label>
    </ligand>
</feature>
<feature type="binding site" evidence="1">
    <location>
        <position position="107"/>
    </location>
    <ligand>
        <name>Fe cation</name>
        <dbReference type="ChEBI" id="CHEBI:24875"/>
        <label>3</label>
    </ligand>
</feature>
<feature type="binding site" evidence="1">
    <location>
        <position position="115"/>
    </location>
    <ligand>
        <name>Fe cation</name>
        <dbReference type="ChEBI" id="CHEBI:24875"/>
        <label>1</label>
    </ligand>
</feature>
<feature type="binding site" evidence="1">
    <location>
        <position position="115"/>
    </location>
    <ligand>
        <name>Fe cation</name>
        <dbReference type="ChEBI" id="CHEBI:24875"/>
        <label>2</label>
    </ligand>
</feature>
<feature type="binding site" evidence="1">
    <location>
        <position position="115"/>
    </location>
    <ligand>
        <name>Fe cation</name>
        <dbReference type="ChEBI" id="CHEBI:24875"/>
        <label>3</label>
    </ligand>
</feature>
<feature type="binding site" evidence="1">
    <location>
        <position position="118"/>
    </location>
    <ligand>
        <name>Fe cation</name>
        <dbReference type="ChEBI" id="CHEBI:24875"/>
        <label>1</label>
    </ligand>
</feature>
<feature type="binding site" evidence="1">
    <location>
        <position position="118"/>
    </location>
    <ligand>
        <name>Fe cation</name>
        <dbReference type="ChEBI" id="CHEBI:24875"/>
        <label>2</label>
    </ligand>
</feature>
<feature type="binding site" evidence="1">
    <location>
        <position position="118"/>
    </location>
    <ligand>
        <name>Fe cation</name>
        <dbReference type="ChEBI" id="CHEBI:24875"/>
        <label>3</label>
    </ligand>
</feature>
<feature type="binding site" evidence="1">
    <location>
        <position position="151"/>
    </location>
    <ligand>
        <name>Fe cation</name>
        <dbReference type="ChEBI" id="CHEBI:24875"/>
        <label>2</label>
    </ligand>
</feature>
<feature type="binding site" evidence="1">
    <location>
        <position position="155"/>
    </location>
    <ligand>
        <name>Fe cation</name>
        <dbReference type="ChEBI" id="CHEBI:24875"/>
        <label>1</label>
    </ligand>
</feature>
<organism>
    <name type="scientific">Oryza sativa subsp. japonica</name>
    <name type="common">Rice</name>
    <dbReference type="NCBI Taxonomy" id="39947"/>
    <lineage>
        <taxon>Eukaryota</taxon>
        <taxon>Viridiplantae</taxon>
        <taxon>Streptophyta</taxon>
        <taxon>Embryophyta</taxon>
        <taxon>Tracheophyta</taxon>
        <taxon>Spermatophyta</taxon>
        <taxon>Magnoliopsida</taxon>
        <taxon>Liliopsida</taxon>
        <taxon>Poales</taxon>
        <taxon>Poaceae</taxon>
        <taxon>BOP clade</taxon>
        <taxon>Oryzoideae</taxon>
        <taxon>Oryzeae</taxon>
        <taxon>Oryzinae</taxon>
        <taxon>Oryza</taxon>
        <taxon>Oryza sativa</taxon>
    </lineage>
</organism>
<proteinExistence type="evidence at transcript level"/>
<evidence type="ECO:0000250" key="1">
    <source>
        <dbReference type="UniProtKB" id="P0DO17"/>
    </source>
</evidence>
<evidence type="ECO:0000255" key="2"/>
<evidence type="ECO:0000269" key="3">
    <source>
    </source>
</evidence>
<evidence type="ECO:0000269" key="4">
    <source>
    </source>
</evidence>
<evidence type="ECO:0000303" key="5">
    <source>
    </source>
</evidence>
<evidence type="ECO:0000305" key="6"/>
<evidence type="ECO:0000305" key="7">
    <source>
    </source>
</evidence>
<evidence type="ECO:0000312" key="8">
    <source>
        <dbReference type="EMBL" id="BAS89575.1"/>
    </source>
</evidence>
<evidence type="ECO:0000312" key="9">
    <source>
        <dbReference type="EMBL" id="CAE76010.1"/>
    </source>
</evidence>
<evidence type="ECO:0000312" key="10">
    <source>
        <dbReference type="EMBL" id="EAZ30998.1"/>
    </source>
</evidence>
<comment type="function">
    <text evidence="3 7">Vacuolar iron transporter involved in the transfer of iron ions from the cytosol to the vacuole for intracellular iron storage (PubMed:22731699). Vacuolar iron storage is required for seed embryo and seedling development (Probable). May be involved in the regulation of iron translocation between flag leaves and seeds (Probable). Can transport zinc ions from the cytosol to the vacuole (PubMed:22731699).</text>
</comment>
<comment type="catalytic activity">
    <reaction evidence="3 4">
        <text>Fe(2+)(in) = Fe(2+)(out)</text>
        <dbReference type="Rhea" id="RHEA:28486"/>
        <dbReference type="ChEBI" id="CHEBI:29033"/>
    </reaction>
    <physiologicalReaction direction="left-to-right" evidence="6">
        <dbReference type="Rhea" id="RHEA:28487"/>
    </physiologicalReaction>
</comment>
<comment type="subunit">
    <text evidence="1">Homodimer. The dimeric interaction is mediated by both the transmembrane domains (TMDs) and the cytoplasmic metal binding domain (MBD).</text>
</comment>
<comment type="subcellular location">
    <subcellularLocation>
        <location evidence="3">Vacuole membrane</location>
        <topology evidence="2">Multi-pass membrane protein</topology>
    </subcellularLocation>
    <text evidence="3">Localizes to the tonoplast.</text>
</comment>
<comment type="tissue specificity">
    <text evidence="3">Highly expressed in leaf blades (PubMed:22731699). Expressed in leaf sheaths (PubMed:22731699).</text>
</comment>
<comment type="induction">
    <text evidence="3">Slightly induced by treatment with iron in roots (PubMed:22731699). Slightly down-regulated under iron deficiency in roots (PubMed:22731699).</text>
</comment>
<comment type="domain">
    <text evidence="1">The cytoplasmic metal binding domain (MBD) is located between transmembrane 2 (TM2) and transmembrane 3 (TM3).</text>
</comment>
<comment type="disruption phenotype">
    <text evidence="3">No visible phenotype under normal growth conditions, but mutant embryos exhibit higher levels of iron and zinc, and leaf blades of mutant plants show decreased levels of iron and zinc.</text>
</comment>
<comment type="miscellaneous">
    <text evidence="3 4">Can mediate sequestration of iron ions into vacuoles when expressed in the yeast ccc1 mutant (PubMed:22731699, PubMed:32119117). Can mediate zinc ions sequestration into vacuoles when expressed in the yeast zrc1 mutant (PubMed:22731699).</text>
</comment>
<comment type="similarity">
    <text evidence="6">Belongs to the CCC1 family.</text>
</comment>
<accession>Q6MWE5</accession>
<accession>A0A0P0WB17</accession>
<reference key="1">
    <citation type="journal article" date="2002" name="Nature">
        <title>Sequence and analysis of rice chromosome 4.</title>
        <authorList>
            <person name="Feng Q."/>
            <person name="Zhang Y."/>
            <person name="Hao P."/>
            <person name="Wang S."/>
            <person name="Fu G."/>
            <person name="Huang Y."/>
            <person name="Li Y."/>
            <person name="Zhu J."/>
            <person name="Liu Y."/>
            <person name="Hu X."/>
            <person name="Jia P."/>
            <person name="Zhang Y."/>
            <person name="Zhao Q."/>
            <person name="Ying K."/>
            <person name="Yu S."/>
            <person name="Tang Y."/>
            <person name="Weng Q."/>
            <person name="Zhang L."/>
            <person name="Lu Y."/>
            <person name="Mu J."/>
            <person name="Lu Y."/>
            <person name="Zhang L.S."/>
            <person name="Yu Z."/>
            <person name="Fan D."/>
            <person name="Liu X."/>
            <person name="Lu T."/>
            <person name="Li C."/>
            <person name="Wu Y."/>
            <person name="Sun T."/>
            <person name="Lei H."/>
            <person name="Li T."/>
            <person name="Hu H."/>
            <person name="Guan J."/>
            <person name="Wu M."/>
            <person name="Zhang R."/>
            <person name="Zhou B."/>
            <person name="Chen Z."/>
            <person name="Chen L."/>
            <person name="Jin Z."/>
            <person name="Wang R."/>
            <person name="Yin H."/>
            <person name="Cai Z."/>
            <person name="Ren S."/>
            <person name="Lv G."/>
            <person name="Gu W."/>
            <person name="Zhu G."/>
            <person name="Tu Y."/>
            <person name="Jia J."/>
            <person name="Zhang Y."/>
            <person name="Chen J."/>
            <person name="Kang H."/>
            <person name="Chen X."/>
            <person name="Shao C."/>
            <person name="Sun Y."/>
            <person name="Hu Q."/>
            <person name="Zhang X."/>
            <person name="Zhang W."/>
            <person name="Wang L."/>
            <person name="Ding C."/>
            <person name="Sheng H."/>
            <person name="Gu J."/>
            <person name="Chen S."/>
            <person name="Ni L."/>
            <person name="Zhu F."/>
            <person name="Chen W."/>
            <person name="Lan L."/>
            <person name="Lai Y."/>
            <person name="Cheng Z."/>
            <person name="Gu M."/>
            <person name="Jiang J."/>
            <person name="Li J."/>
            <person name="Hong G."/>
            <person name="Xue Y."/>
            <person name="Han B."/>
        </authorList>
    </citation>
    <scope>NUCLEOTIDE SEQUENCE [LARGE SCALE GENOMIC DNA]</scope>
    <source>
        <strain>cv. Nipponbare</strain>
    </source>
</reference>
<reference key="2">
    <citation type="journal article" date="2005" name="Nature">
        <title>The map-based sequence of the rice genome.</title>
        <authorList>
            <consortium name="International rice genome sequencing project (IRGSP)"/>
        </authorList>
    </citation>
    <scope>NUCLEOTIDE SEQUENCE [LARGE SCALE GENOMIC DNA]</scope>
    <source>
        <strain>cv. Nipponbare</strain>
    </source>
</reference>
<reference key="3">
    <citation type="journal article" date="2008" name="Nucleic Acids Res.">
        <title>The rice annotation project database (RAP-DB): 2008 update.</title>
        <authorList>
            <consortium name="The rice annotation project (RAP)"/>
        </authorList>
    </citation>
    <scope>GENOME REANNOTATION</scope>
    <source>
        <strain>cv. Nipponbare</strain>
    </source>
</reference>
<reference key="4">
    <citation type="journal article" date="2013" name="Rice">
        <title>Improvement of the Oryza sativa Nipponbare reference genome using next generation sequence and optical map data.</title>
        <authorList>
            <person name="Kawahara Y."/>
            <person name="de la Bastide M."/>
            <person name="Hamilton J.P."/>
            <person name="Kanamori H."/>
            <person name="McCombie W.R."/>
            <person name="Ouyang S."/>
            <person name="Schwartz D.C."/>
            <person name="Tanaka T."/>
            <person name="Wu J."/>
            <person name="Zhou S."/>
            <person name="Childs K.L."/>
            <person name="Davidson R.M."/>
            <person name="Lin H."/>
            <person name="Quesada-Ocampo L."/>
            <person name="Vaillancourt B."/>
            <person name="Sakai H."/>
            <person name="Lee S.S."/>
            <person name="Kim J."/>
            <person name="Numa H."/>
            <person name="Itoh T."/>
            <person name="Buell C.R."/>
            <person name="Matsumoto T."/>
        </authorList>
    </citation>
    <scope>GENOME REANNOTATION</scope>
    <source>
        <strain>cv. Nipponbare</strain>
    </source>
</reference>
<reference key="5">
    <citation type="journal article" date="2005" name="PLoS Biol.">
        <title>The genomes of Oryza sativa: a history of duplications.</title>
        <authorList>
            <person name="Yu J."/>
            <person name="Wang J."/>
            <person name="Lin W."/>
            <person name="Li S."/>
            <person name="Li H."/>
            <person name="Zhou J."/>
            <person name="Ni P."/>
            <person name="Dong W."/>
            <person name="Hu S."/>
            <person name="Zeng C."/>
            <person name="Zhang J."/>
            <person name="Zhang Y."/>
            <person name="Li R."/>
            <person name="Xu Z."/>
            <person name="Li S."/>
            <person name="Li X."/>
            <person name="Zheng H."/>
            <person name="Cong L."/>
            <person name="Lin L."/>
            <person name="Yin J."/>
            <person name="Geng J."/>
            <person name="Li G."/>
            <person name="Shi J."/>
            <person name="Liu J."/>
            <person name="Lv H."/>
            <person name="Li J."/>
            <person name="Wang J."/>
            <person name="Deng Y."/>
            <person name="Ran L."/>
            <person name="Shi X."/>
            <person name="Wang X."/>
            <person name="Wu Q."/>
            <person name="Li C."/>
            <person name="Ren X."/>
            <person name="Wang J."/>
            <person name="Wang X."/>
            <person name="Li D."/>
            <person name="Liu D."/>
            <person name="Zhang X."/>
            <person name="Ji Z."/>
            <person name="Zhao W."/>
            <person name="Sun Y."/>
            <person name="Zhang Z."/>
            <person name="Bao J."/>
            <person name="Han Y."/>
            <person name="Dong L."/>
            <person name="Ji J."/>
            <person name="Chen P."/>
            <person name="Wu S."/>
            <person name="Liu J."/>
            <person name="Xiao Y."/>
            <person name="Bu D."/>
            <person name="Tan J."/>
            <person name="Yang L."/>
            <person name="Ye C."/>
            <person name="Zhang J."/>
            <person name="Xu J."/>
            <person name="Zhou Y."/>
            <person name="Yu Y."/>
            <person name="Zhang B."/>
            <person name="Zhuang S."/>
            <person name="Wei H."/>
            <person name="Liu B."/>
            <person name="Lei M."/>
            <person name="Yu H."/>
            <person name="Li Y."/>
            <person name="Xu H."/>
            <person name="Wei S."/>
            <person name="He X."/>
            <person name="Fang L."/>
            <person name="Zhang Z."/>
            <person name="Zhang Y."/>
            <person name="Huang X."/>
            <person name="Su Z."/>
            <person name="Tong W."/>
            <person name="Li J."/>
            <person name="Tong Z."/>
            <person name="Li S."/>
            <person name="Ye J."/>
            <person name="Wang L."/>
            <person name="Fang L."/>
            <person name="Lei T."/>
            <person name="Chen C.-S."/>
            <person name="Chen H.-C."/>
            <person name="Xu Z."/>
            <person name="Li H."/>
            <person name="Huang H."/>
            <person name="Zhang F."/>
            <person name="Xu H."/>
            <person name="Li N."/>
            <person name="Zhao C."/>
            <person name="Li S."/>
            <person name="Dong L."/>
            <person name="Huang Y."/>
            <person name="Li L."/>
            <person name="Xi Y."/>
            <person name="Qi Q."/>
            <person name="Li W."/>
            <person name="Zhang B."/>
            <person name="Hu W."/>
            <person name="Zhang Y."/>
            <person name="Tian X."/>
            <person name="Jiao Y."/>
            <person name="Liang X."/>
            <person name="Jin J."/>
            <person name="Gao L."/>
            <person name="Zheng W."/>
            <person name="Hao B."/>
            <person name="Liu S.-M."/>
            <person name="Wang W."/>
            <person name="Yuan L."/>
            <person name="Cao M."/>
            <person name="McDermott J."/>
            <person name="Samudrala R."/>
            <person name="Wang J."/>
            <person name="Wong G.K.-S."/>
            <person name="Yang H."/>
        </authorList>
    </citation>
    <scope>NUCLEOTIDE SEQUENCE [LARGE SCALE GENOMIC DNA]</scope>
    <source>
        <strain>cv. Nipponbare</strain>
    </source>
</reference>
<reference key="6">
    <citation type="journal article" date="2003" name="Science">
        <title>Collection, mapping, and annotation of over 28,000 cDNA clones from japonica rice.</title>
        <authorList>
            <consortium name="The rice full-length cDNA consortium"/>
        </authorList>
    </citation>
    <scope>NUCLEOTIDE SEQUENCE [LARGE SCALE MRNA]</scope>
    <source>
        <strain>cv. Nipponbare</strain>
    </source>
</reference>
<reference key="7">
    <citation type="journal article" date="2012" name="Plant J.">
        <title>Vacuolar membrane transporters OsVIT1 and OsVIT2 modulate iron translocation between flag leaves and seeds in rice.</title>
        <authorList>
            <person name="Zhang Y."/>
            <person name="Xu Y.H."/>
            <person name="Yi H.Y."/>
            <person name="Gong J.M."/>
        </authorList>
    </citation>
    <scope>FUNCTION</scope>
    <scope>TRANSPORTER ACTIVITY</scope>
    <scope>SUBCELLULAR LOCATION</scope>
    <scope>TISSUE SPECIFICITY</scope>
    <scope>INDUCTION</scope>
    <scope>DISRUPTION PHENOTYPE</scope>
</reference>
<reference evidence="6" key="8">
    <citation type="journal article" date="2020" name="New Phytol.">
        <title>A VIT-like transporter facilitates iron transport into nodule symbiosomes for nitrogen fixation in soybean.</title>
        <authorList>
            <person name="Liu S."/>
            <person name="Liao L.L."/>
            <person name="Nie M.M."/>
            <person name="Peng W.T."/>
            <person name="Zhang M.S."/>
            <person name="Lei J.N."/>
            <person name="Zhong Y.J."/>
            <person name="Liao H."/>
            <person name="Chen Z.C."/>
        </authorList>
    </citation>
    <scope>TRANSPORTER ACTIVITY</scope>
</reference>